<dbReference type="EC" id="6.1.1.1" evidence="1"/>
<dbReference type="EMBL" id="CP000720">
    <property type="protein sequence ID" value="ABS47748.1"/>
    <property type="molecule type" value="Genomic_DNA"/>
</dbReference>
<dbReference type="RefSeq" id="WP_011192524.1">
    <property type="nucleotide sequence ID" value="NC_009708.1"/>
</dbReference>
<dbReference type="SMR" id="A7FHM0"/>
<dbReference type="GeneID" id="49785720"/>
<dbReference type="KEGG" id="ypi:YpsIP31758_1773"/>
<dbReference type="HOGENOM" id="CLU_024003_0_3_6"/>
<dbReference type="Proteomes" id="UP000002412">
    <property type="component" value="Chromosome"/>
</dbReference>
<dbReference type="GO" id="GO:0005829">
    <property type="term" value="C:cytosol"/>
    <property type="evidence" value="ECO:0007669"/>
    <property type="project" value="TreeGrafter"/>
</dbReference>
<dbReference type="GO" id="GO:0005524">
    <property type="term" value="F:ATP binding"/>
    <property type="evidence" value="ECO:0007669"/>
    <property type="project" value="UniProtKB-UniRule"/>
</dbReference>
<dbReference type="GO" id="GO:0003723">
    <property type="term" value="F:RNA binding"/>
    <property type="evidence" value="ECO:0007669"/>
    <property type="project" value="UniProtKB-KW"/>
</dbReference>
<dbReference type="GO" id="GO:0004831">
    <property type="term" value="F:tyrosine-tRNA ligase activity"/>
    <property type="evidence" value="ECO:0007669"/>
    <property type="project" value="UniProtKB-UniRule"/>
</dbReference>
<dbReference type="GO" id="GO:0006437">
    <property type="term" value="P:tyrosyl-tRNA aminoacylation"/>
    <property type="evidence" value="ECO:0007669"/>
    <property type="project" value="UniProtKB-UniRule"/>
</dbReference>
<dbReference type="CDD" id="cd00165">
    <property type="entry name" value="S4"/>
    <property type="match status" value="1"/>
</dbReference>
<dbReference type="CDD" id="cd00805">
    <property type="entry name" value="TyrRS_core"/>
    <property type="match status" value="1"/>
</dbReference>
<dbReference type="FunFam" id="1.10.240.10:FF:000001">
    <property type="entry name" value="Tyrosine--tRNA ligase"/>
    <property type="match status" value="1"/>
</dbReference>
<dbReference type="FunFam" id="3.10.290.10:FF:000007">
    <property type="entry name" value="Tyrosine--tRNA ligase"/>
    <property type="match status" value="1"/>
</dbReference>
<dbReference type="FunFam" id="3.40.50.620:FF:000008">
    <property type="entry name" value="Tyrosine--tRNA ligase"/>
    <property type="match status" value="1"/>
</dbReference>
<dbReference type="Gene3D" id="3.40.50.620">
    <property type="entry name" value="HUPs"/>
    <property type="match status" value="1"/>
</dbReference>
<dbReference type="Gene3D" id="3.10.290.10">
    <property type="entry name" value="RNA-binding S4 domain"/>
    <property type="match status" value="1"/>
</dbReference>
<dbReference type="Gene3D" id="1.10.240.10">
    <property type="entry name" value="Tyrosyl-Transfer RNA Synthetase"/>
    <property type="match status" value="1"/>
</dbReference>
<dbReference type="HAMAP" id="MF_02006">
    <property type="entry name" value="Tyr_tRNA_synth_type1"/>
    <property type="match status" value="1"/>
</dbReference>
<dbReference type="InterPro" id="IPR001412">
    <property type="entry name" value="aa-tRNA-synth_I_CS"/>
</dbReference>
<dbReference type="InterPro" id="IPR002305">
    <property type="entry name" value="aa-tRNA-synth_Ic"/>
</dbReference>
<dbReference type="InterPro" id="IPR014729">
    <property type="entry name" value="Rossmann-like_a/b/a_fold"/>
</dbReference>
<dbReference type="InterPro" id="IPR002942">
    <property type="entry name" value="S4_RNA-bd"/>
</dbReference>
<dbReference type="InterPro" id="IPR036986">
    <property type="entry name" value="S4_RNA-bd_sf"/>
</dbReference>
<dbReference type="InterPro" id="IPR054608">
    <property type="entry name" value="SYY-like_C"/>
</dbReference>
<dbReference type="InterPro" id="IPR002307">
    <property type="entry name" value="Tyr-tRNA-ligase"/>
</dbReference>
<dbReference type="InterPro" id="IPR024088">
    <property type="entry name" value="Tyr-tRNA-ligase_bac-type"/>
</dbReference>
<dbReference type="InterPro" id="IPR024107">
    <property type="entry name" value="Tyr-tRNA-ligase_bac_1"/>
</dbReference>
<dbReference type="NCBIfam" id="TIGR00234">
    <property type="entry name" value="tyrS"/>
    <property type="match status" value="1"/>
</dbReference>
<dbReference type="PANTHER" id="PTHR11766:SF0">
    <property type="entry name" value="TYROSINE--TRNA LIGASE, MITOCHONDRIAL"/>
    <property type="match status" value="1"/>
</dbReference>
<dbReference type="PANTHER" id="PTHR11766">
    <property type="entry name" value="TYROSYL-TRNA SYNTHETASE"/>
    <property type="match status" value="1"/>
</dbReference>
<dbReference type="Pfam" id="PF22421">
    <property type="entry name" value="SYY_C-terminal"/>
    <property type="match status" value="1"/>
</dbReference>
<dbReference type="Pfam" id="PF00579">
    <property type="entry name" value="tRNA-synt_1b"/>
    <property type="match status" value="1"/>
</dbReference>
<dbReference type="PRINTS" id="PR01040">
    <property type="entry name" value="TRNASYNTHTYR"/>
</dbReference>
<dbReference type="SMART" id="SM00363">
    <property type="entry name" value="S4"/>
    <property type="match status" value="1"/>
</dbReference>
<dbReference type="SUPFAM" id="SSF55174">
    <property type="entry name" value="Alpha-L RNA-binding motif"/>
    <property type="match status" value="1"/>
</dbReference>
<dbReference type="SUPFAM" id="SSF52374">
    <property type="entry name" value="Nucleotidylyl transferase"/>
    <property type="match status" value="1"/>
</dbReference>
<dbReference type="PROSITE" id="PS00178">
    <property type="entry name" value="AA_TRNA_LIGASE_I"/>
    <property type="match status" value="1"/>
</dbReference>
<dbReference type="PROSITE" id="PS50889">
    <property type="entry name" value="S4"/>
    <property type="match status" value="1"/>
</dbReference>
<evidence type="ECO:0000255" key="1">
    <source>
        <dbReference type="HAMAP-Rule" id="MF_02006"/>
    </source>
</evidence>
<organism>
    <name type="scientific">Yersinia pseudotuberculosis serotype O:1b (strain IP 31758)</name>
    <dbReference type="NCBI Taxonomy" id="349747"/>
    <lineage>
        <taxon>Bacteria</taxon>
        <taxon>Pseudomonadati</taxon>
        <taxon>Pseudomonadota</taxon>
        <taxon>Gammaproteobacteria</taxon>
        <taxon>Enterobacterales</taxon>
        <taxon>Yersiniaceae</taxon>
        <taxon>Yersinia</taxon>
    </lineage>
</organism>
<feature type="chain" id="PRO_1000088643" description="Tyrosine--tRNA ligase">
    <location>
        <begin position="1"/>
        <end position="424"/>
    </location>
</feature>
<feature type="domain" description="S4 RNA-binding" evidence="1">
    <location>
        <begin position="357"/>
        <end position="414"/>
    </location>
</feature>
<feature type="short sequence motif" description="'HIGH' region">
    <location>
        <begin position="42"/>
        <end position="51"/>
    </location>
</feature>
<feature type="short sequence motif" description="'KMSKS' region">
    <location>
        <begin position="235"/>
        <end position="239"/>
    </location>
</feature>
<feature type="binding site" evidence="1">
    <location>
        <position position="37"/>
    </location>
    <ligand>
        <name>L-tyrosine</name>
        <dbReference type="ChEBI" id="CHEBI:58315"/>
    </ligand>
</feature>
<feature type="binding site" evidence="1">
    <location>
        <position position="175"/>
    </location>
    <ligand>
        <name>L-tyrosine</name>
        <dbReference type="ChEBI" id="CHEBI:58315"/>
    </ligand>
</feature>
<feature type="binding site" evidence="1">
    <location>
        <position position="179"/>
    </location>
    <ligand>
        <name>L-tyrosine</name>
        <dbReference type="ChEBI" id="CHEBI:58315"/>
    </ligand>
</feature>
<feature type="binding site" evidence="1">
    <location>
        <position position="238"/>
    </location>
    <ligand>
        <name>ATP</name>
        <dbReference type="ChEBI" id="CHEBI:30616"/>
    </ligand>
</feature>
<name>SYY_YERP3</name>
<gene>
    <name evidence="1" type="primary">tyrS</name>
    <name type="ordered locus">YpsIP31758_1773</name>
</gene>
<accession>A7FHM0</accession>
<reference key="1">
    <citation type="journal article" date="2007" name="PLoS Genet.">
        <title>The complete genome sequence of Yersinia pseudotuberculosis IP31758, the causative agent of Far East scarlet-like fever.</title>
        <authorList>
            <person name="Eppinger M."/>
            <person name="Rosovitz M.J."/>
            <person name="Fricke W.F."/>
            <person name="Rasko D.A."/>
            <person name="Kokorina G."/>
            <person name="Fayolle C."/>
            <person name="Lindler L.E."/>
            <person name="Carniel E."/>
            <person name="Ravel J."/>
        </authorList>
    </citation>
    <scope>NUCLEOTIDE SEQUENCE [LARGE SCALE GENOMIC DNA]</scope>
    <source>
        <strain>IP 31758</strain>
    </source>
</reference>
<protein>
    <recommendedName>
        <fullName evidence="1">Tyrosine--tRNA ligase</fullName>
        <ecNumber evidence="1">6.1.1.1</ecNumber>
    </recommendedName>
    <alternativeName>
        <fullName evidence="1">Tyrosyl-tRNA synthetase</fullName>
        <shortName evidence="1">TyrRS</shortName>
    </alternativeName>
</protein>
<comment type="function">
    <text evidence="1">Catalyzes the attachment of tyrosine to tRNA(Tyr) in a two-step reaction: tyrosine is first activated by ATP to form Tyr-AMP and then transferred to the acceptor end of tRNA(Tyr).</text>
</comment>
<comment type="catalytic activity">
    <reaction evidence="1">
        <text>tRNA(Tyr) + L-tyrosine + ATP = L-tyrosyl-tRNA(Tyr) + AMP + diphosphate + H(+)</text>
        <dbReference type="Rhea" id="RHEA:10220"/>
        <dbReference type="Rhea" id="RHEA-COMP:9706"/>
        <dbReference type="Rhea" id="RHEA-COMP:9707"/>
        <dbReference type="ChEBI" id="CHEBI:15378"/>
        <dbReference type="ChEBI" id="CHEBI:30616"/>
        <dbReference type="ChEBI" id="CHEBI:33019"/>
        <dbReference type="ChEBI" id="CHEBI:58315"/>
        <dbReference type="ChEBI" id="CHEBI:78442"/>
        <dbReference type="ChEBI" id="CHEBI:78536"/>
        <dbReference type="ChEBI" id="CHEBI:456215"/>
        <dbReference type="EC" id="6.1.1.1"/>
    </reaction>
</comment>
<comment type="subunit">
    <text evidence="1">Homodimer.</text>
</comment>
<comment type="subcellular location">
    <subcellularLocation>
        <location evidence="1">Cytoplasm</location>
    </subcellularLocation>
</comment>
<comment type="similarity">
    <text evidence="1">Belongs to the class-I aminoacyl-tRNA synthetase family. TyrS type 1 subfamily.</text>
</comment>
<sequence length="424" mass="47172">MTSSNLIKQLQERGLVAQVTDEDALAERLAQGPISLYCGFDPTADSLHLGHLVPLLCLKRFQLAGHRPVALVGGATGMIGDPSFKASERKLNTEDTVNEWVEKIRHQVSPFLDFDCGENSAIAANNYDWFGGMNVLTFLRDIGKHFSVNQMINKEAVKQRLNRDDSGISFTEFSYNLLQAYDFACLNKNHGVALQIGGSDQWGNITSGIDLTRRLHQQQVYGLTVPLITKADGTKFGKTEGGAVWLDPKKTSPYKFYQFWINTADADVYRFLKFFTFMSLEEINALEEEDKNSGKAPRAQYVLAENVTGMVHGPEGLAAAKRITESLFSGDLHDMTEADFAQLAQDGMPTVELNRDADLQQALVNAELVPSRGQARTMIGSNAVAINGEKQADPEYVFTDADRLFGRYTLLRRGKKHYCLISWL</sequence>
<keyword id="KW-0030">Aminoacyl-tRNA synthetase</keyword>
<keyword id="KW-0067">ATP-binding</keyword>
<keyword id="KW-0963">Cytoplasm</keyword>
<keyword id="KW-0436">Ligase</keyword>
<keyword id="KW-0547">Nucleotide-binding</keyword>
<keyword id="KW-0648">Protein biosynthesis</keyword>
<keyword id="KW-0694">RNA-binding</keyword>
<proteinExistence type="inferred from homology"/>